<feature type="chain" id="PRO_0000375761" description="Succinyl-diaminopimelate desuccinylase">
    <location>
        <begin position="1"/>
        <end position="376"/>
    </location>
</feature>
<feature type="active site" evidence="1">
    <location>
        <position position="68"/>
    </location>
</feature>
<feature type="active site" description="Proton acceptor" evidence="1">
    <location>
        <position position="133"/>
    </location>
</feature>
<feature type="binding site" evidence="1">
    <location>
        <position position="66"/>
    </location>
    <ligand>
        <name>Zn(2+)</name>
        <dbReference type="ChEBI" id="CHEBI:29105"/>
        <label>1</label>
    </ligand>
</feature>
<feature type="binding site" evidence="1">
    <location>
        <position position="99"/>
    </location>
    <ligand>
        <name>Zn(2+)</name>
        <dbReference type="ChEBI" id="CHEBI:29105"/>
        <label>1</label>
    </ligand>
</feature>
<feature type="binding site" evidence="1">
    <location>
        <position position="99"/>
    </location>
    <ligand>
        <name>Zn(2+)</name>
        <dbReference type="ChEBI" id="CHEBI:29105"/>
        <label>2</label>
    </ligand>
</feature>
<feature type="binding site" evidence="1">
    <location>
        <position position="134"/>
    </location>
    <ligand>
        <name>Zn(2+)</name>
        <dbReference type="ChEBI" id="CHEBI:29105"/>
        <label>2</label>
    </ligand>
</feature>
<feature type="binding site" evidence="1">
    <location>
        <position position="162"/>
    </location>
    <ligand>
        <name>Zn(2+)</name>
        <dbReference type="ChEBI" id="CHEBI:29105"/>
        <label>1</label>
    </ligand>
</feature>
<feature type="binding site" evidence="1">
    <location>
        <position position="348"/>
    </location>
    <ligand>
        <name>Zn(2+)</name>
        <dbReference type="ChEBI" id="CHEBI:29105"/>
        <label>2</label>
    </ligand>
</feature>
<gene>
    <name evidence="1" type="primary">dapE</name>
    <name type="ordered locus">Tgr7_1150</name>
</gene>
<comment type="function">
    <text evidence="1">Catalyzes the hydrolysis of N-succinyl-L,L-diaminopimelic acid (SDAP), forming succinate and LL-2,6-diaminopimelate (DAP), an intermediate involved in the bacterial biosynthesis of lysine and meso-diaminopimelic acid, an essential component of bacterial cell walls.</text>
</comment>
<comment type="catalytic activity">
    <reaction evidence="1">
        <text>N-succinyl-(2S,6S)-2,6-diaminopimelate + H2O = (2S,6S)-2,6-diaminopimelate + succinate</text>
        <dbReference type="Rhea" id="RHEA:22608"/>
        <dbReference type="ChEBI" id="CHEBI:15377"/>
        <dbReference type="ChEBI" id="CHEBI:30031"/>
        <dbReference type="ChEBI" id="CHEBI:57609"/>
        <dbReference type="ChEBI" id="CHEBI:58087"/>
        <dbReference type="EC" id="3.5.1.18"/>
    </reaction>
</comment>
<comment type="cofactor">
    <cofactor evidence="1">
        <name>Zn(2+)</name>
        <dbReference type="ChEBI" id="CHEBI:29105"/>
    </cofactor>
    <cofactor evidence="1">
        <name>Co(2+)</name>
        <dbReference type="ChEBI" id="CHEBI:48828"/>
    </cofactor>
    <text evidence="1">Binds 2 Zn(2+) or Co(2+) ions per subunit.</text>
</comment>
<comment type="pathway">
    <text evidence="1">Amino-acid biosynthesis; L-lysine biosynthesis via DAP pathway; LL-2,6-diaminopimelate from (S)-tetrahydrodipicolinate (succinylase route): step 3/3.</text>
</comment>
<comment type="subunit">
    <text evidence="1">Homodimer.</text>
</comment>
<comment type="similarity">
    <text evidence="1">Belongs to the peptidase M20A family. DapE subfamily.</text>
</comment>
<accession>B8GPR9</accession>
<dbReference type="EC" id="3.5.1.18" evidence="1"/>
<dbReference type="EMBL" id="CP001339">
    <property type="protein sequence ID" value="ACL72236.1"/>
    <property type="molecule type" value="Genomic_DNA"/>
</dbReference>
<dbReference type="RefSeq" id="WP_012637720.1">
    <property type="nucleotide sequence ID" value="NC_011901.1"/>
</dbReference>
<dbReference type="SMR" id="B8GPR9"/>
<dbReference type="STRING" id="396588.Tgr7_1150"/>
<dbReference type="KEGG" id="tgr:Tgr7_1150"/>
<dbReference type="eggNOG" id="COG0624">
    <property type="taxonomic scope" value="Bacteria"/>
</dbReference>
<dbReference type="HOGENOM" id="CLU_021802_4_0_6"/>
<dbReference type="OrthoDB" id="9809784at2"/>
<dbReference type="UniPathway" id="UPA00034">
    <property type="reaction ID" value="UER00021"/>
</dbReference>
<dbReference type="Proteomes" id="UP000002383">
    <property type="component" value="Chromosome"/>
</dbReference>
<dbReference type="GO" id="GO:0008777">
    <property type="term" value="F:acetylornithine deacetylase activity"/>
    <property type="evidence" value="ECO:0007669"/>
    <property type="project" value="TreeGrafter"/>
</dbReference>
<dbReference type="GO" id="GO:0050897">
    <property type="term" value="F:cobalt ion binding"/>
    <property type="evidence" value="ECO:0007669"/>
    <property type="project" value="UniProtKB-UniRule"/>
</dbReference>
<dbReference type="GO" id="GO:0009014">
    <property type="term" value="F:succinyl-diaminopimelate desuccinylase activity"/>
    <property type="evidence" value="ECO:0007669"/>
    <property type="project" value="UniProtKB-UniRule"/>
</dbReference>
<dbReference type="GO" id="GO:0008270">
    <property type="term" value="F:zinc ion binding"/>
    <property type="evidence" value="ECO:0007669"/>
    <property type="project" value="UniProtKB-UniRule"/>
</dbReference>
<dbReference type="GO" id="GO:0019877">
    <property type="term" value="P:diaminopimelate biosynthetic process"/>
    <property type="evidence" value="ECO:0007669"/>
    <property type="project" value="UniProtKB-UniRule"/>
</dbReference>
<dbReference type="GO" id="GO:0006526">
    <property type="term" value="P:L-arginine biosynthetic process"/>
    <property type="evidence" value="ECO:0007669"/>
    <property type="project" value="TreeGrafter"/>
</dbReference>
<dbReference type="GO" id="GO:0009089">
    <property type="term" value="P:lysine biosynthetic process via diaminopimelate"/>
    <property type="evidence" value="ECO:0007669"/>
    <property type="project" value="UniProtKB-UniRule"/>
</dbReference>
<dbReference type="CDD" id="cd03891">
    <property type="entry name" value="M20_DapE_proteobac"/>
    <property type="match status" value="1"/>
</dbReference>
<dbReference type="FunFam" id="3.30.70.360:FF:000011">
    <property type="entry name" value="Succinyl-diaminopimelate desuccinylase"/>
    <property type="match status" value="1"/>
</dbReference>
<dbReference type="FunFam" id="3.40.630.10:FF:000005">
    <property type="entry name" value="Succinyl-diaminopimelate desuccinylase"/>
    <property type="match status" value="1"/>
</dbReference>
<dbReference type="Gene3D" id="3.40.630.10">
    <property type="entry name" value="Zn peptidases"/>
    <property type="match status" value="2"/>
</dbReference>
<dbReference type="HAMAP" id="MF_01690">
    <property type="entry name" value="DapE"/>
    <property type="match status" value="1"/>
</dbReference>
<dbReference type="InterPro" id="IPR001261">
    <property type="entry name" value="ArgE/DapE_CS"/>
</dbReference>
<dbReference type="InterPro" id="IPR036264">
    <property type="entry name" value="Bact_exopeptidase_dim_dom"/>
</dbReference>
<dbReference type="InterPro" id="IPR005941">
    <property type="entry name" value="DapE_proteobac"/>
</dbReference>
<dbReference type="InterPro" id="IPR002933">
    <property type="entry name" value="Peptidase_M20"/>
</dbReference>
<dbReference type="InterPro" id="IPR011650">
    <property type="entry name" value="Peptidase_M20_dimer"/>
</dbReference>
<dbReference type="InterPro" id="IPR050072">
    <property type="entry name" value="Peptidase_M20A"/>
</dbReference>
<dbReference type="NCBIfam" id="TIGR01246">
    <property type="entry name" value="dapE_proteo"/>
    <property type="match status" value="1"/>
</dbReference>
<dbReference type="NCBIfam" id="NF009557">
    <property type="entry name" value="PRK13009.1"/>
    <property type="match status" value="1"/>
</dbReference>
<dbReference type="PANTHER" id="PTHR43808">
    <property type="entry name" value="ACETYLORNITHINE DEACETYLASE"/>
    <property type="match status" value="1"/>
</dbReference>
<dbReference type="PANTHER" id="PTHR43808:SF31">
    <property type="entry name" value="N-ACETYL-L-CITRULLINE DEACETYLASE"/>
    <property type="match status" value="1"/>
</dbReference>
<dbReference type="Pfam" id="PF07687">
    <property type="entry name" value="M20_dimer"/>
    <property type="match status" value="1"/>
</dbReference>
<dbReference type="Pfam" id="PF01546">
    <property type="entry name" value="Peptidase_M20"/>
    <property type="match status" value="1"/>
</dbReference>
<dbReference type="SUPFAM" id="SSF55031">
    <property type="entry name" value="Bacterial exopeptidase dimerisation domain"/>
    <property type="match status" value="1"/>
</dbReference>
<dbReference type="SUPFAM" id="SSF53187">
    <property type="entry name" value="Zn-dependent exopeptidases"/>
    <property type="match status" value="1"/>
</dbReference>
<dbReference type="PROSITE" id="PS00758">
    <property type="entry name" value="ARGE_DAPE_CPG2_1"/>
    <property type="match status" value="1"/>
</dbReference>
<dbReference type="PROSITE" id="PS00759">
    <property type="entry name" value="ARGE_DAPE_CPG2_2"/>
    <property type="match status" value="1"/>
</dbReference>
<evidence type="ECO:0000255" key="1">
    <source>
        <dbReference type="HAMAP-Rule" id="MF_01690"/>
    </source>
</evidence>
<organism>
    <name type="scientific">Thioalkalivibrio sulfidiphilus (strain HL-EbGR7)</name>
    <dbReference type="NCBI Taxonomy" id="396588"/>
    <lineage>
        <taxon>Bacteria</taxon>
        <taxon>Pseudomonadati</taxon>
        <taxon>Pseudomonadota</taxon>
        <taxon>Gammaproteobacteria</taxon>
        <taxon>Chromatiales</taxon>
        <taxon>Ectothiorhodospiraceae</taxon>
        <taxon>Thioalkalivibrio</taxon>
    </lineage>
</organism>
<protein>
    <recommendedName>
        <fullName evidence="1">Succinyl-diaminopimelate desuccinylase</fullName>
        <shortName evidence="1">SDAP desuccinylase</shortName>
        <ecNumber evidence="1">3.5.1.18</ecNumber>
    </recommendedName>
    <alternativeName>
        <fullName evidence="1">N-succinyl-LL-2,6-diaminoheptanedioate amidohydrolase</fullName>
    </alternativeName>
</protein>
<sequence>MSDTLDLAQELIRRRSVTPEDAGCQQLIAERLAPLGFEAHHLRFEDVDNLWLRRGSEGPVLAFAGHTDVVPTGPVEKWSSDPFQPQIRNGQLYGRGAADMKSSIAAFVIACEAFLKDHPDHKGSIALLITSDEEGPSVNGTVKVVEWLEARGEKITWALVGEPSSTERLGDVIKNGRRGSLSGVLRVRGQQGHVAYPHLADNPVHRALPALAELAAIQWDEGNEHFPPTSFQISNIHAGTGAENVIPGELEVMFNLRFSTEQTDEGIRTRVHAVLDAHGLDYELSWRLSGHPFLTAEGELVEAASAAIREVMGLDTELSTAGGTSDGRFIAPTGAQVVELGPLNASIHKIDEHVRIEDLDALSRIYTGILKRLLVE</sequence>
<keyword id="KW-0028">Amino-acid biosynthesis</keyword>
<keyword id="KW-0170">Cobalt</keyword>
<keyword id="KW-0220">Diaminopimelate biosynthesis</keyword>
<keyword id="KW-0378">Hydrolase</keyword>
<keyword id="KW-0457">Lysine biosynthesis</keyword>
<keyword id="KW-0479">Metal-binding</keyword>
<keyword id="KW-1185">Reference proteome</keyword>
<keyword id="KW-0862">Zinc</keyword>
<proteinExistence type="inferred from homology"/>
<reference key="1">
    <citation type="journal article" date="2011" name="Stand. Genomic Sci.">
        <title>Complete genome sequence of 'Thioalkalivibrio sulfidophilus' HL-EbGr7.</title>
        <authorList>
            <person name="Muyzer G."/>
            <person name="Sorokin D.Y."/>
            <person name="Mavromatis K."/>
            <person name="Lapidus A."/>
            <person name="Clum A."/>
            <person name="Ivanova N."/>
            <person name="Pati A."/>
            <person name="d'Haeseleer P."/>
            <person name="Woyke T."/>
            <person name="Kyrpides N.C."/>
        </authorList>
    </citation>
    <scope>NUCLEOTIDE SEQUENCE [LARGE SCALE GENOMIC DNA]</scope>
    <source>
        <strain>HL-EbGR7</strain>
    </source>
</reference>
<name>DAPE_THISH</name>